<gene>
    <name evidence="1" type="primary">metK</name>
    <name type="ordered locus">Anae109_0159</name>
</gene>
<evidence type="ECO:0000255" key="1">
    <source>
        <dbReference type="HAMAP-Rule" id="MF_00086"/>
    </source>
</evidence>
<protein>
    <recommendedName>
        <fullName evidence="1">S-adenosylmethionine synthase</fullName>
        <shortName evidence="1">AdoMet synthase</shortName>
        <ecNumber evidence="1">2.5.1.6</ecNumber>
    </recommendedName>
    <alternativeName>
        <fullName evidence="1">MAT</fullName>
    </alternativeName>
    <alternativeName>
        <fullName evidence="1">Methionine adenosyltransferase</fullName>
    </alternativeName>
</protein>
<accession>A7H6N1</accession>
<sequence>MPHTDYLFTSESVTEGHPDKMADQISDAVLDAVLAQDKKGRVACETLLKTGYVMIAGEITTTARIEYPKLAREVVKRIGYVSGDMGFDGNTCGVLVAVDQQSPDIGQGVDVGGAGDQGMMFGYACDETNELMPAPIQYAHAVTRQLAKARRGGLDFLRPDGKSQVTVEYRGGKVARIDTVVVSTQHSESVSNRKLHAALREEVIAKALPKKLVDRKTKVFINPTGRFVIGGPMGDTGVTGRKIIVDTYGGMGRHGGGAFSGKDPSKVDRSAAYMGRYIAKNVVAAGLARRCEVQVAYAIGVAEPVSVMVETFGTAAVPEERIAQAVREVFGLTPKQIIEGLDLLRPVYEKTAAYGHFGRTEKEFSWERTDKKDALRDAAGGKVRAVAGA</sequence>
<proteinExistence type="inferred from homology"/>
<organism>
    <name type="scientific">Anaeromyxobacter sp. (strain Fw109-5)</name>
    <dbReference type="NCBI Taxonomy" id="404589"/>
    <lineage>
        <taxon>Bacteria</taxon>
        <taxon>Pseudomonadati</taxon>
        <taxon>Myxococcota</taxon>
        <taxon>Myxococcia</taxon>
        <taxon>Myxococcales</taxon>
        <taxon>Cystobacterineae</taxon>
        <taxon>Anaeromyxobacteraceae</taxon>
        <taxon>Anaeromyxobacter</taxon>
    </lineage>
</organism>
<keyword id="KW-0067">ATP-binding</keyword>
<keyword id="KW-0963">Cytoplasm</keyword>
<keyword id="KW-0460">Magnesium</keyword>
<keyword id="KW-0479">Metal-binding</keyword>
<keyword id="KW-0547">Nucleotide-binding</keyword>
<keyword id="KW-0554">One-carbon metabolism</keyword>
<keyword id="KW-0630">Potassium</keyword>
<keyword id="KW-1185">Reference proteome</keyword>
<keyword id="KW-0808">Transferase</keyword>
<dbReference type="EC" id="2.5.1.6" evidence="1"/>
<dbReference type="EMBL" id="CP000769">
    <property type="protein sequence ID" value="ABS24377.1"/>
    <property type="molecule type" value="Genomic_DNA"/>
</dbReference>
<dbReference type="RefSeq" id="WP_011984483.1">
    <property type="nucleotide sequence ID" value="NC_009675.1"/>
</dbReference>
<dbReference type="SMR" id="A7H6N1"/>
<dbReference type="STRING" id="404589.Anae109_0159"/>
<dbReference type="KEGG" id="afw:Anae109_0159"/>
<dbReference type="eggNOG" id="COG0192">
    <property type="taxonomic scope" value="Bacteria"/>
</dbReference>
<dbReference type="HOGENOM" id="CLU_041802_1_1_7"/>
<dbReference type="OrthoDB" id="9801686at2"/>
<dbReference type="UniPathway" id="UPA00315">
    <property type="reaction ID" value="UER00080"/>
</dbReference>
<dbReference type="Proteomes" id="UP000006382">
    <property type="component" value="Chromosome"/>
</dbReference>
<dbReference type="GO" id="GO:0005737">
    <property type="term" value="C:cytoplasm"/>
    <property type="evidence" value="ECO:0007669"/>
    <property type="project" value="UniProtKB-SubCell"/>
</dbReference>
<dbReference type="GO" id="GO:0005524">
    <property type="term" value="F:ATP binding"/>
    <property type="evidence" value="ECO:0007669"/>
    <property type="project" value="UniProtKB-UniRule"/>
</dbReference>
<dbReference type="GO" id="GO:0000287">
    <property type="term" value="F:magnesium ion binding"/>
    <property type="evidence" value="ECO:0007669"/>
    <property type="project" value="UniProtKB-UniRule"/>
</dbReference>
<dbReference type="GO" id="GO:0004478">
    <property type="term" value="F:methionine adenosyltransferase activity"/>
    <property type="evidence" value="ECO:0007669"/>
    <property type="project" value="UniProtKB-UniRule"/>
</dbReference>
<dbReference type="GO" id="GO:0006730">
    <property type="term" value="P:one-carbon metabolic process"/>
    <property type="evidence" value="ECO:0007669"/>
    <property type="project" value="UniProtKB-KW"/>
</dbReference>
<dbReference type="GO" id="GO:0006556">
    <property type="term" value="P:S-adenosylmethionine biosynthetic process"/>
    <property type="evidence" value="ECO:0007669"/>
    <property type="project" value="UniProtKB-UniRule"/>
</dbReference>
<dbReference type="CDD" id="cd18079">
    <property type="entry name" value="S-AdoMet_synt"/>
    <property type="match status" value="1"/>
</dbReference>
<dbReference type="FunFam" id="3.30.300.10:FF:000003">
    <property type="entry name" value="S-adenosylmethionine synthase"/>
    <property type="match status" value="1"/>
</dbReference>
<dbReference type="Gene3D" id="3.30.300.10">
    <property type="match status" value="3"/>
</dbReference>
<dbReference type="HAMAP" id="MF_00086">
    <property type="entry name" value="S_AdoMet_synth1"/>
    <property type="match status" value="1"/>
</dbReference>
<dbReference type="InterPro" id="IPR022631">
    <property type="entry name" value="ADOMET_SYNTHASE_CS"/>
</dbReference>
<dbReference type="InterPro" id="IPR022630">
    <property type="entry name" value="S-AdoMet_synt_C"/>
</dbReference>
<dbReference type="InterPro" id="IPR022629">
    <property type="entry name" value="S-AdoMet_synt_central"/>
</dbReference>
<dbReference type="InterPro" id="IPR022628">
    <property type="entry name" value="S-AdoMet_synt_N"/>
</dbReference>
<dbReference type="InterPro" id="IPR002133">
    <property type="entry name" value="S-AdoMet_synthetase"/>
</dbReference>
<dbReference type="InterPro" id="IPR022636">
    <property type="entry name" value="S-AdoMet_synthetase_sfam"/>
</dbReference>
<dbReference type="NCBIfam" id="TIGR01034">
    <property type="entry name" value="metK"/>
    <property type="match status" value="1"/>
</dbReference>
<dbReference type="PANTHER" id="PTHR11964">
    <property type="entry name" value="S-ADENOSYLMETHIONINE SYNTHETASE"/>
    <property type="match status" value="1"/>
</dbReference>
<dbReference type="Pfam" id="PF02773">
    <property type="entry name" value="S-AdoMet_synt_C"/>
    <property type="match status" value="1"/>
</dbReference>
<dbReference type="Pfam" id="PF02772">
    <property type="entry name" value="S-AdoMet_synt_M"/>
    <property type="match status" value="1"/>
</dbReference>
<dbReference type="Pfam" id="PF00438">
    <property type="entry name" value="S-AdoMet_synt_N"/>
    <property type="match status" value="1"/>
</dbReference>
<dbReference type="PIRSF" id="PIRSF000497">
    <property type="entry name" value="MAT"/>
    <property type="match status" value="1"/>
</dbReference>
<dbReference type="SUPFAM" id="SSF55973">
    <property type="entry name" value="S-adenosylmethionine synthetase"/>
    <property type="match status" value="3"/>
</dbReference>
<dbReference type="PROSITE" id="PS00376">
    <property type="entry name" value="ADOMET_SYNTHASE_1"/>
    <property type="match status" value="1"/>
</dbReference>
<dbReference type="PROSITE" id="PS00377">
    <property type="entry name" value="ADOMET_SYNTHASE_2"/>
    <property type="match status" value="1"/>
</dbReference>
<name>METK_ANADF</name>
<reference key="1">
    <citation type="journal article" date="2015" name="Genome Announc.">
        <title>Complete genome sequence of Anaeromyxobacter sp. Fw109-5, an anaerobic, metal-reducing bacterium isolated from a contaminated subsurface environment.</title>
        <authorList>
            <person name="Hwang C."/>
            <person name="Copeland A."/>
            <person name="Lucas S."/>
            <person name="Lapidus A."/>
            <person name="Barry K."/>
            <person name="Glavina Del Rio T."/>
            <person name="Dalin E."/>
            <person name="Tice H."/>
            <person name="Pitluck S."/>
            <person name="Sims D."/>
            <person name="Brettin T."/>
            <person name="Bruce D.C."/>
            <person name="Detter J.C."/>
            <person name="Han C.S."/>
            <person name="Schmutz J."/>
            <person name="Larimer F.W."/>
            <person name="Land M.L."/>
            <person name="Hauser L.J."/>
            <person name="Kyrpides N."/>
            <person name="Lykidis A."/>
            <person name="Richardson P."/>
            <person name="Belieav A."/>
            <person name="Sanford R.A."/>
            <person name="Loeffler F.E."/>
            <person name="Fields M.W."/>
        </authorList>
    </citation>
    <scope>NUCLEOTIDE SEQUENCE [LARGE SCALE GENOMIC DNA]</scope>
    <source>
        <strain>Fw109-5</strain>
    </source>
</reference>
<comment type="function">
    <text evidence="1">Catalyzes the formation of S-adenosylmethionine (AdoMet) from methionine and ATP. The overall synthetic reaction is composed of two sequential steps, AdoMet formation and the subsequent tripolyphosphate hydrolysis which occurs prior to release of AdoMet from the enzyme.</text>
</comment>
<comment type="catalytic activity">
    <reaction evidence="1">
        <text>L-methionine + ATP + H2O = S-adenosyl-L-methionine + phosphate + diphosphate</text>
        <dbReference type="Rhea" id="RHEA:21080"/>
        <dbReference type="ChEBI" id="CHEBI:15377"/>
        <dbReference type="ChEBI" id="CHEBI:30616"/>
        <dbReference type="ChEBI" id="CHEBI:33019"/>
        <dbReference type="ChEBI" id="CHEBI:43474"/>
        <dbReference type="ChEBI" id="CHEBI:57844"/>
        <dbReference type="ChEBI" id="CHEBI:59789"/>
        <dbReference type="EC" id="2.5.1.6"/>
    </reaction>
</comment>
<comment type="cofactor">
    <cofactor evidence="1">
        <name>Mg(2+)</name>
        <dbReference type="ChEBI" id="CHEBI:18420"/>
    </cofactor>
    <text evidence="1">Binds 2 divalent ions per subunit.</text>
</comment>
<comment type="cofactor">
    <cofactor evidence="1">
        <name>K(+)</name>
        <dbReference type="ChEBI" id="CHEBI:29103"/>
    </cofactor>
    <text evidence="1">Binds 1 potassium ion per subunit.</text>
</comment>
<comment type="pathway">
    <text evidence="1">Amino-acid biosynthesis; S-adenosyl-L-methionine biosynthesis; S-adenosyl-L-methionine from L-methionine: step 1/1.</text>
</comment>
<comment type="subunit">
    <text evidence="1">Homotetramer; dimer of dimers.</text>
</comment>
<comment type="subcellular location">
    <subcellularLocation>
        <location evidence="1">Cytoplasm</location>
    </subcellularLocation>
</comment>
<comment type="similarity">
    <text evidence="1">Belongs to the AdoMet synthase family.</text>
</comment>
<feature type="chain" id="PRO_1000007923" description="S-adenosylmethionine synthase">
    <location>
        <begin position="1"/>
        <end position="389"/>
    </location>
</feature>
<feature type="region of interest" description="Flexible loop" evidence="1">
    <location>
        <begin position="101"/>
        <end position="111"/>
    </location>
</feature>
<feature type="binding site" description="in other chain" evidence="1">
    <location>
        <position position="17"/>
    </location>
    <ligand>
        <name>ATP</name>
        <dbReference type="ChEBI" id="CHEBI:30616"/>
        <note>ligand shared between two neighboring subunits</note>
    </ligand>
</feature>
<feature type="binding site" evidence="1">
    <location>
        <position position="19"/>
    </location>
    <ligand>
        <name>Mg(2+)</name>
        <dbReference type="ChEBI" id="CHEBI:18420"/>
    </ligand>
</feature>
<feature type="binding site" evidence="1">
    <location>
        <position position="45"/>
    </location>
    <ligand>
        <name>K(+)</name>
        <dbReference type="ChEBI" id="CHEBI:29103"/>
    </ligand>
</feature>
<feature type="binding site" description="in other chain" evidence="1">
    <location>
        <position position="58"/>
    </location>
    <ligand>
        <name>L-methionine</name>
        <dbReference type="ChEBI" id="CHEBI:57844"/>
        <note>ligand shared between two neighboring subunits</note>
    </ligand>
</feature>
<feature type="binding site" description="in other chain" evidence="1">
    <location>
        <position position="101"/>
    </location>
    <ligand>
        <name>L-methionine</name>
        <dbReference type="ChEBI" id="CHEBI:57844"/>
        <note>ligand shared between two neighboring subunits</note>
    </ligand>
</feature>
<feature type="binding site" description="in other chain" evidence="1">
    <location>
        <begin position="160"/>
        <end position="162"/>
    </location>
    <ligand>
        <name>ATP</name>
        <dbReference type="ChEBI" id="CHEBI:30616"/>
        <note>ligand shared between two neighboring subunits</note>
    </ligand>
</feature>
<feature type="binding site" description="in other chain" evidence="1">
    <location>
        <begin position="226"/>
        <end position="227"/>
    </location>
    <ligand>
        <name>ATP</name>
        <dbReference type="ChEBI" id="CHEBI:30616"/>
        <note>ligand shared between two neighboring subunits</note>
    </ligand>
</feature>
<feature type="binding site" evidence="1">
    <location>
        <position position="235"/>
    </location>
    <ligand>
        <name>ATP</name>
        <dbReference type="ChEBI" id="CHEBI:30616"/>
        <note>ligand shared between two neighboring subunits</note>
    </ligand>
</feature>
<feature type="binding site" evidence="1">
    <location>
        <position position="235"/>
    </location>
    <ligand>
        <name>L-methionine</name>
        <dbReference type="ChEBI" id="CHEBI:57844"/>
        <note>ligand shared between two neighboring subunits</note>
    </ligand>
</feature>
<feature type="binding site" description="in other chain" evidence="1">
    <location>
        <begin position="241"/>
        <end position="242"/>
    </location>
    <ligand>
        <name>ATP</name>
        <dbReference type="ChEBI" id="CHEBI:30616"/>
        <note>ligand shared between two neighboring subunits</note>
    </ligand>
</feature>
<feature type="binding site" evidence="1">
    <location>
        <position position="258"/>
    </location>
    <ligand>
        <name>ATP</name>
        <dbReference type="ChEBI" id="CHEBI:30616"/>
        <note>ligand shared between two neighboring subunits</note>
    </ligand>
</feature>
<feature type="binding site" evidence="1">
    <location>
        <position position="262"/>
    </location>
    <ligand>
        <name>ATP</name>
        <dbReference type="ChEBI" id="CHEBI:30616"/>
        <note>ligand shared between two neighboring subunits</note>
    </ligand>
</feature>
<feature type="binding site" description="in other chain" evidence="1">
    <location>
        <position position="266"/>
    </location>
    <ligand>
        <name>L-methionine</name>
        <dbReference type="ChEBI" id="CHEBI:57844"/>
        <note>ligand shared between two neighboring subunits</note>
    </ligand>
</feature>